<feature type="chain" id="PRO_0000410979" description="Nanos homolog 1">
    <location>
        <begin position="1"/>
        <end position="128"/>
    </location>
</feature>
<feature type="zinc finger region" description="Nanos-type" evidence="2">
    <location>
        <begin position="60"/>
        <end position="114"/>
    </location>
</feature>
<feature type="region of interest" description="Essential for its translational repressor activity" evidence="1">
    <location>
        <begin position="7"/>
        <end position="23"/>
    </location>
</feature>
<feature type="region of interest" description="Disordered" evidence="3">
    <location>
        <begin position="23"/>
        <end position="58"/>
    </location>
</feature>
<feature type="short sequence motif" description="C2HC 1" evidence="2">
    <location>
        <begin position="61"/>
        <end position="88"/>
    </location>
</feature>
<feature type="short sequence motif" description="C2HC 2" evidence="2">
    <location>
        <begin position="96"/>
        <end position="112"/>
    </location>
</feature>
<feature type="binding site" evidence="2">
    <location>
        <position position="61"/>
    </location>
    <ligand>
        <name>Zn(2+)</name>
        <dbReference type="ChEBI" id="CHEBI:29105"/>
        <label>1</label>
    </ligand>
</feature>
<feature type="binding site" evidence="2">
    <location>
        <position position="64"/>
    </location>
    <ligand>
        <name>Zn(2+)</name>
        <dbReference type="ChEBI" id="CHEBI:29105"/>
        <label>1</label>
    </ligand>
</feature>
<feature type="binding site" evidence="2">
    <location>
        <position position="77"/>
    </location>
    <ligand>
        <name>Zn(2+)</name>
        <dbReference type="ChEBI" id="CHEBI:29105"/>
        <label>1</label>
    </ligand>
</feature>
<feature type="binding site" evidence="2">
    <location>
        <position position="88"/>
    </location>
    <ligand>
        <name>Zn(2+)</name>
        <dbReference type="ChEBI" id="CHEBI:29105"/>
        <label>1</label>
    </ligand>
</feature>
<feature type="binding site" evidence="2">
    <location>
        <position position="96"/>
    </location>
    <ligand>
        <name>Zn(2+)</name>
        <dbReference type="ChEBI" id="CHEBI:29105"/>
        <label>2</label>
    </ligand>
</feature>
<feature type="binding site" evidence="2">
    <location>
        <position position="99"/>
    </location>
    <ligand>
        <name>Zn(2+)</name>
        <dbReference type="ChEBI" id="CHEBI:29105"/>
        <label>2</label>
    </ligand>
</feature>
<feature type="binding site" evidence="2">
    <location>
        <position position="107"/>
    </location>
    <ligand>
        <name>Zn(2+)</name>
        <dbReference type="ChEBI" id="CHEBI:29105"/>
        <label>2</label>
    </ligand>
</feature>
<feature type="binding site" evidence="2">
    <location>
        <position position="112"/>
    </location>
    <ligand>
        <name>Zn(2+)</name>
        <dbReference type="ChEBI" id="CHEBI:29105"/>
        <label>2</label>
    </ligand>
</feature>
<feature type="sequence conflict" description="In Ref. 2; AAI70990." evidence="4" ref="2">
    <original>S</original>
    <variation>Y</variation>
    <location>
        <position position="41"/>
    </location>
</feature>
<reference key="1">
    <citation type="journal article" date="2011" name="Mech. Dev.">
        <title>Nanos1 functions as a translational repressor in the Xenopus germline.</title>
        <authorList>
            <person name="Lai F."/>
            <person name="Zhou Y."/>
            <person name="Luo X."/>
            <person name="Fox J."/>
            <person name="King M.L."/>
        </authorList>
    </citation>
    <scope>NUCLEOTIDE SEQUENCE [MRNA]</scope>
</reference>
<reference key="2">
    <citation type="submission" date="2008-03" db="EMBL/GenBank/DDBJ databases">
        <authorList>
            <consortium name="NIH - Xenopus Gene Collection (XGC) project"/>
        </authorList>
    </citation>
    <scope>NUCLEOTIDE SEQUENCE [LARGE SCALE MRNA]</scope>
    <source>
        <tissue>Embryo</tissue>
        <tissue>Gastrula</tissue>
    </source>
</reference>
<protein>
    <recommendedName>
        <fullName>Nanos homolog 1</fullName>
    </recommendedName>
    <alternativeName>
        <fullName>Xcat-2 protein</fullName>
    </alternativeName>
</protein>
<organism>
    <name type="scientific">Xenopus tropicalis</name>
    <name type="common">Western clawed frog</name>
    <name type="synonym">Silurana tropicalis</name>
    <dbReference type="NCBI Taxonomy" id="8364"/>
    <lineage>
        <taxon>Eukaryota</taxon>
        <taxon>Metazoa</taxon>
        <taxon>Chordata</taxon>
        <taxon>Craniata</taxon>
        <taxon>Vertebrata</taxon>
        <taxon>Euteleostomi</taxon>
        <taxon>Amphibia</taxon>
        <taxon>Batrachia</taxon>
        <taxon>Anura</taxon>
        <taxon>Pipoidea</taxon>
        <taxon>Pipidae</taxon>
        <taxon>Xenopodinae</taxon>
        <taxon>Xenopus</taxon>
        <taxon>Silurana</taxon>
    </lineage>
</organism>
<sequence>MDGGLCFNSWSDYLGLSSLISRGLQPREGGESPRPRWKASSPTPAEPLPSKAAEAHGHKGCGFCRSNREAQSLYSSHRLRAPDGRVLCPVLRGYTCPLCGANGDWAHTMRYCPLRHFLRHPHSPRDGQ</sequence>
<keyword id="KW-0963">Cytoplasm</keyword>
<keyword id="KW-0479">Metal-binding</keyword>
<keyword id="KW-1185">Reference proteome</keyword>
<keyword id="KW-0678">Repressor</keyword>
<keyword id="KW-0694">RNA-binding</keyword>
<keyword id="KW-0810">Translation regulation</keyword>
<keyword id="KW-0862">Zinc</keyword>
<keyword id="KW-0863">Zinc-finger</keyword>
<proteinExistence type="evidence at transcript level"/>
<evidence type="ECO:0000250" key="1"/>
<evidence type="ECO:0000255" key="2">
    <source>
        <dbReference type="PROSITE-ProRule" id="PRU00855"/>
    </source>
</evidence>
<evidence type="ECO:0000256" key="3">
    <source>
        <dbReference type="SAM" id="MobiDB-lite"/>
    </source>
</evidence>
<evidence type="ECO:0000305" key="4"/>
<name>NANO1_XENTR</name>
<gene>
    <name type="primary">nanos1</name>
    <name type="synonym">xcat-2</name>
</gene>
<dbReference type="EMBL" id="AF256086">
    <property type="protein sequence ID" value="AAK49295.1"/>
    <property type="molecule type" value="mRNA"/>
</dbReference>
<dbReference type="EMBL" id="BC160384">
    <property type="protein sequence ID" value="AAI60384.1"/>
    <property type="molecule type" value="mRNA"/>
</dbReference>
<dbReference type="EMBL" id="BC170990">
    <property type="protein sequence ID" value="AAI70990.1"/>
    <property type="molecule type" value="mRNA"/>
</dbReference>
<dbReference type="RefSeq" id="NP_988857.1">
    <property type="nucleotide sequence ID" value="NM_203526.1"/>
</dbReference>
<dbReference type="SMR" id="Q90ZZ6"/>
<dbReference type="ELM" id="Q90ZZ6"/>
<dbReference type="STRING" id="8364.ENSXETP00000022249"/>
<dbReference type="PaxDb" id="8364-ENSXETP00000052998"/>
<dbReference type="GeneID" id="394451"/>
<dbReference type="KEGG" id="xtr:394451"/>
<dbReference type="AGR" id="Xenbase:XB-GENE-868377"/>
<dbReference type="CTD" id="340719"/>
<dbReference type="Xenbase" id="XB-GENE-868377">
    <property type="gene designation" value="nanos1"/>
</dbReference>
<dbReference type="eggNOG" id="KOG4602">
    <property type="taxonomic scope" value="Eukaryota"/>
</dbReference>
<dbReference type="HOGENOM" id="CLU_094055_1_1_1"/>
<dbReference type="InParanoid" id="Q90ZZ6"/>
<dbReference type="OMA" id="DCFDMWH"/>
<dbReference type="OrthoDB" id="10010129at2759"/>
<dbReference type="PhylomeDB" id="Q90ZZ6"/>
<dbReference type="TreeFam" id="TF326882"/>
<dbReference type="Proteomes" id="UP000008143">
    <property type="component" value="Chromosome 7"/>
</dbReference>
<dbReference type="GO" id="GO:0005737">
    <property type="term" value="C:cytoplasm"/>
    <property type="evidence" value="ECO:0000250"/>
    <property type="project" value="UniProtKB"/>
</dbReference>
<dbReference type="GO" id="GO:0060293">
    <property type="term" value="C:germ plasm"/>
    <property type="evidence" value="ECO:0000250"/>
    <property type="project" value="UniProtKB"/>
</dbReference>
<dbReference type="GO" id="GO:0048471">
    <property type="term" value="C:perinuclear region of cytoplasm"/>
    <property type="evidence" value="ECO:0000250"/>
    <property type="project" value="UniProtKB"/>
</dbReference>
<dbReference type="GO" id="GO:0003723">
    <property type="term" value="F:RNA binding"/>
    <property type="evidence" value="ECO:0007669"/>
    <property type="project" value="UniProtKB-KW"/>
</dbReference>
<dbReference type="GO" id="GO:0030371">
    <property type="term" value="F:translation repressor activity"/>
    <property type="evidence" value="ECO:0000250"/>
    <property type="project" value="UniProtKB"/>
</dbReference>
<dbReference type="GO" id="GO:0008270">
    <property type="term" value="F:zinc ion binding"/>
    <property type="evidence" value="ECO:0007669"/>
    <property type="project" value="UniProtKB-KW"/>
</dbReference>
<dbReference type="FunFam" id="4.10.60.30:FF:000001">
    <property type="entry name" value="nanos homolog 3"/>
    <property type="match status" value="1"/>
</dbReference>
<dbReference type="Gene3D" id="4.10.60.30">
    <property type="entry name" value="Nanos, RNA-binding domain"/>
    <property type="match status" value="1"/>
</dbReference>
<dbReference type="InterPro" id="IPR008705">
    <property type="entry name" value="Nanos/Xcar2"/>
</dbReference>
<dbReference type="InterPro" id="IPR038129">
    <property type="entry name" value="Nanos_sf"/>
</dbReference>
<dbReference type="InterPro" id="IPR024161">
    <property type="entry name" value="Znf_nanos-typ"/>
</dbReference>
<dbReference type="PANTHER" id="PTHR12887">
    <property type="entry name" value="NANOS PROTEIN"/>
    <property type="match status" value="1"/>
</dbReference>
<dbReference type="Pfam" id="PF05741">
    <property type="entry name" value="zf-nanos"/>
    <property type="match status" value="1"/>
</dbReference>
<dbReference type="PROSITE" id="PS51522">
    <property type="entry name" value="ZF_NANOS"/>
    <property type="match status" value="1"/>
</dbReference>
<comment type="function">
    <text evidence="1">Acts as a translational repressor. Can mediate repression affecting different steps in the translation process: cap-driven, IRES-driven, polyadenylated RNAs or nonpolyadenylated RNAs. Essential for the development of primordial germ cells (PGCs) by ensuring their proper migration and survival (By similarity).</text>
</comment>
<comment type="subunit">
    <text evidence="1">Interacts with ccnb1.</text>
</comment>
<comment type="subcellular location">
    <subcellularLocation>
        <location evidence="1">Cytoplasm</location>
    </subcellularLocation>
    <subcellularLocation>
        <location evidence="1">Cytoplasm</location>
        <location evidence="1">Perinuclear region</location>
    </subcellularLocation>
    <text evidence="1">During early cleavage and blastula stages found close to the cell periphery in a germ plasm-like pattern. From gastrula stage on, detected predominantly in a perinuclear region (By similarity).</text>
</comment>
<comment type="domain">
    <text evidence="2">The Nanos-type zinc finger is composed of two C2HC motifs, each motif binding one molecule of zinc. It is essential for the translation repression activity of the protein.</text>
</comment>
<comment type="similarity">
    <text evidence="2">Belongs to the nanos family.</text>
</comment>
<accession>Q90ZZ6</accession>
<accession>B7ZTT7</accession>